<reference key="1">
    <citation type="journal article" date="2007" name="Mol. Biol. Evol.">
        <title>Chloroplast genome (cpDNA) of Cycas taitungensis and 56 cp protein-coding genes of Gnetum parvifolium: insights into cpDNA evolution and phylogeny of extant seed plants.</title>
        <authorList>
            <person name="Wu C.-S."/>
            <person name="Wang Y.-N."/>
            <person name="Liu S.-M."/>
            <person name="Chaw S.-M."/>
        </authorList>
    </citation>
    <scope>NUCLEOTIDE SEQUENCE [LARGE SCALE GENOMIC DNA]</scope>
</reference>
<name>PSBB_CYCTA</name>
<protein>
    <recommendedName>
        <fullName evidence="1">Photosystem II CP47 reaction center protein</fullName>
    </recommendedName>
    <alternativeName>
        <fullName evidence="1">PSII 47 kDa protein</fullName>
    </alternativeName>
    <alternativeName>
        <fullName evidence="1">Protein CP-47</fullName>
    </alternativeName>
</protein>
<accession>A6H5K7</accession>
<evidence type="ECO:0000255" key="1">
    <source>
        <dbReference type="HAMAP-Rule" id="MF_01495"/>
    </source>
</evidence>
<keyword id="KW-0148">Chlorophyll</keyword>
<keyword id="KW-0150">Chloroplast</keyword>
<keyword id="KW-0157">Chromophore</keyword>
<keyword id="KW-0472">Membrane</keyword>
<keyword id="KW-0602">Photosynthesis</keyword>
<keyword id="KW-0604">Photosystem II</keyword>
<keyword id="KW-0934">Plastid</keyword>
<keyword id="KW-0793">Thylakoid</keyword>
<keyword id="KW-0812">Transmembrane</keyword>
<keyword id="KW-1133">Transmembrane helix</keyword>
<dbReference type="EMBL" id="AP009339">
    <property type="protein sequence ID" value="BAF64973.1"/>
    <property type="molecule type" value="Genomic_DNA"/>
</dbReference>
<dbReference type="RefSeq" id="YP_001312232.1">
    <property type="nucleotide sequence ID" value="NC_009618.1"/>
</dbReference>
<dbReference type="GeneID" id="5309472"/>
<dbReference type="GO" id="GO:0009535">
    <property type="term" value="C:chloroplast thylakoid membrane"/>
    <property type="evidence" value="ECO:0007669"/>
    <property type="project" value="UniProtKB-SubCell"/>
</dbReference>
<dbReference type="GO" id="GO:0009523">
    <property type="term" value="C:photosystem II"/>
    <property type="evidence" value="ECO:0007669"/>
    <property type="project" value="UniProtKB-KW"/>
</dbReference>
<dbReference type="GO" id="GO:0016168">
    <property type="term" value="F:chlorophyll binding"/>
    <property type="evidence" value="ECO:0007669"/>
    <property type="project" value="UniProtKB-UniRule"/>
</dbReference>
<dbReference type="GO" id="GO:0045156">
    <property type="term" value="F:electron transporter, transferring electrons within the cyclic electron transport pathway of photosynthesis activity"/>
    <property type="evidence" value="ECO:0007669"/>
    <property type="project" value="InterPro"/>
</dbReference>
<dbReference type="GO" id="GO:0009772">
    <property type="term" value="P:photosynthetic electron transport in photosystem II"/>
    <property type="evidence" value="ECO:0007669"/>
    <property type="project" value="InterPro"/>
</dbReference>
<dbReference type="FunFam" id="3.10.680.10:FF:000001">
    <property type="entry name" value="Photosystem II CP47 reaction center protein"/>
    <property type="match status" value="1"/>
</dbReference>
<dbReference type="Gene3D" id="3.10.680.10">
    <property type="entry name" value="Photosystem II CP47 reaction center protein"/>
    <property type="match status" value="1"/>
</dbReference>
<dbReference type="HAMAP" id="MF_01495">
    <property type="entry name" value="PSII_PsbB_CP47"/>
    <property type="match status" value="1"/>
</dbReference>
<dbReference type="InterPro" id="IPR000932">
    <property type="entry name" value="PS_antenna-like"/>
</dbReference>
<dbReference type="InterPro" id="IPR036001">
    <property type="entry name" value="PS_II_antenna-like_sf"/>
</dbReference>
<dbReference type="InterPro" id="IPR017486">
    <property type="entry name" value="PSII_PsbB"/>
</dbReference>
<dbReference type="NCBIfam" id="TIGR03039">
    <property type="entry name" value="PS_II_CP47"/>
    <property type="match status" value="1"/>
</dbReference>
<dbReference type="PANTHER" id="PTHR33180">
    <property type="entry name" value="PHOTOSYSTEM II CP43 REACTION CENTER PROTEIN"/>
    <property type="match status" value="1"/>
</dbReference>
<dbReference type="PANTHER" id="PTHR33180:SF37">
    <property type="entry name" value="PHOTOSYSTEM II CP43 REACTION CENTER PROTEIN"/>
    <property type="match status" value="1"/>
</dbReference>
<dbReference type="Pfam" id="PF00421">
    <property type="entry name" value="PSII"/>
    <property type="match status" value="1"/>
</dbReference>
<dbReference type="SUPFAM" id="SSF161077">
    <property type="entry name" value="Photosystem II antenna protein-like"/>
    <property type="match status" value="1"/>
</dbReference>
<geneLocation type="chloroplast"/>
<organism>
    <name type="scientific">Cycas taitungensis</name>
    <name type="common">Prince sago</name>
    <name type="synonym">Cycas taiwaniana</name>
    <dbReference type="NCBI Taxonomy" id="54799"/>
    <lineage>
        <taxon>Eukaryota</taxon>
        <taxon>Viridiplantae</taxon>
        <taxon>Streptophyta</taxon>
        <taxon>Embryophyta</taxon>
        <taxon>Tracheophyta</taxon>
        <taxon>Spermatophyta</taxon>
        <taxon>Cycadidae</taxon>
        <taxon>Cycadales</taxon>
        <taxon>Cycadaceae</taxon>
        <taxon>Cycas</taxon>
    </lineage>
</organism>
<gene>
    <name evidence="1" type="primary">psbB</name>
</gene>
<comment type="function">
    <text evidence="1">One of the components of the core complex of photosystem II (PSII). It binds chlorophyll and helps catalyze the primary light-induced photochemical processes of PSII. PSII is a light-driven water:plastoquinone oxidoreductase, using light energy to abstract electrons from H(2)O, generating O(2) and a proton gradient subsequently used for ATP formation.</text>
</comment>
<comment type="cofactor">
    <text evidence="1">Binds multiple chlorophylls. PSII binds additional chlorophylls, carotenoids and specific lipids.</text>
</comment>
<comment type="subunit">
    <text evidence="1">PSII is composed of 1 copy each of membrane proteins PsbA, PsbB, PsbC, PsbD, PsbE, PsbF, PsbH, PsbI, PsbJ, PsbK, PsbL, PsbM, PsbT, PsbX, PsbY, PsbZ, Psb30/Ycf12, at least 3 peripheral proteins of the oxygen-evolving complex and a large number of cofactors. It forms dimeric complexes.</text>
</comment>
<comment type="subcellular location">
    <subcellularLocation>
        <location evidence="1">Plastid</location>
        <location evidence="1">Chloroplast thylakoid membrane</location>
        <topology evidence="1">Multi-pass membrane protein</topology>
    </subcellularLocation>
</comment>
<comment type="similarity">
    <text evidence="1">Belongs to the PsbB/PsbC family. PsbB subfamily.</text>
</comment>
<feature type="chain" id="PRO_0000359817" description="Photosystem II CP47 reaction center protein">
    <location>
        <begin position="1"/>
        <end position="508"/>
    </location>
</feature>
<feature type="transmembrane region" description="Helical" evidence="1">
    <location>
        <begin position="21"/>
        <end position="36"/>
    </location>
</feature>
<feature type="transmembrane region" description="Helical" evidence="1">
    <location>
        <begin position="101"/>
        <end position="115"/>
    </location>
</feature>
<feature type="transmembrane region" description="Helical" evidence="1">
    <location>
        <begin position="140"/>
        <end position="156"/>
    </location>
</feature>
<feature type="transmembrane region" description="Helical" evidence="1">
    <location>
        <begin position="203"/>
        <end position="218"/>
    </location>
</feature>
<feature type="transmembrane region" description="Helical" evidence="1">
    <location>
        <begin position="237"/>
        <end position="252"/>
    </location>
</feature>
<feature type="transmembrane region" description="Helical" evidence="1">
    <location>
        <begin position="457"/>
        <end position="472"/>
    </location>
</feature>
<sequence length="508" mass="56077">MGLPWYRVHTVVLNDPGRLLSVHIMHTALVSGWAGSMALYELAVFDPSDPVLDPMWRQGMFVIPFMTRLGINNSWGGWSITGETVTNPGLWSYEGVAGAHIVFSGLCFLAAIWHWVYWDLDIFCDERTGKPSLDLPKIFGIHLFLSGVACFGSGAFHVTGLYGPGIWVSDPYGLTGKIQPVNPAWGAEGFDPFVPGGIASHHIAAGILGILAGLFHLSVRPPQRLYKGLRMGNIETVLSSSIAAVFFAAFIVAGTMWYGSATAPVELFGPTRYQWDQGYFQQEIDRRVRAGLSENLSLSEAWSKIPEKLAFYDYIGNNPAKGGLFRAGAMDNGDGIAVGWLGHPIFRDKEGHELFVRRMPTFFETFPVVLVDEEGIVKADVPFRRAESKYSVEQVGVTVEFYGGELDGVSFGDPATVKKYARRAQLGEIFELDRATLKSDGVFRSSPRGWFTFGHATFALLFFFGHIWHGARTLFRDVFAGIDPDLDAQVEFGAFQXLGDPTTKRQIV</sequence>
<proteinExistence type="inferred from homology"/>